<evidence type="ECO:0000255" key="1">
    <source>
        <dbReference type="HAMAP-Rule" id="MF_01595"/>
    </source>
</evidence>
<dbReference type="EC" id="2.7.7.8" evidence="1"/>
<dbReference type="EMBL" id="AM942444">
    <property type="protein sequence ID" value="CAQ04819.1"/>
    <property type="molecule type" value="Genomic_DNA"/>
</dbReference>
<dbReference type="SMR" id="B1VDC1"/>
<dbReference type="STRING" id="504474.cu0859"/>
<dbReference type="KEGG" id="cur:cu0859"/>
<dbReference type="eggNOG" id="COG1185">
    <property type="taxonomic scope" value="Bacteria"/>
</dbReference>
<dbReference type="HOGENOM" id="CLU_004217_2_2_11"/>
<dbReference type="Proteomes" id="UP000001727">
    <property type="component" value="Chromosome"/>
</dbReference>
<dbReference type="GO" id="GO:0005829">
    <property type="term" value="C:cytosol"/>
    <property type="evidence" value="ECO:0007669"/>
    <property type="project" value="TreeGrafter"/>
</dbReference>
<dbReference type="GO" id="GO:0000175">
    <property type="term" value="F:3'-5'-RNA exonuclease activity"/>
    <property type="evidence" value="ECO:0007669"/>
    <property type="project" value="TreeGrafter"/>
</dbReference>
<dbReference type="GO" id="GO:0000287">
    <property type="term" value="F:magnesium ion binding"/>
    <property type="evidence" value="ECO:0007669"/>
    <property type="project" value="UniProtKB-UniRule"/>
</dbReference>
<dbReference type="GO" id="GO:0004654">
    <property type="term" value="F:polyribonucleotide nucleotidyltransferase activity"/>
    <property type="evidence" value="ECO:0007669"/>
    <property type="project" value="UniProtKB-UniRule"/>
</dbReference>
<dbReference type="GO" id="GO:0003723">
    <property type="term" value="F:RNA binding"/>
    <property type="evidence" value="ECO:0007669"/>
    <property type="project" value="UniProtKB-UniRule"/>
</dbReference>
<dbReference type="GO" id="GO:0006402">
    <property type="term" value="P:mRNA catabolic process"/>
    <property type="evidence" value="ECO:0007669"/>
    <property type="project" value="UniProtKB-UniRule"/>
</dbReference>
<dbReference type="GO" id="GO:0006396">
    <property type="term" value="P:RNA processing"/>
    <property type="evidence" value="ECO:0007669"/>
    <property type="project" value="InterPro"/>
</dbReference>
<dbReference type="CDD" id="cd02393">
    <property type="entry name" value="KH-I_PNPase"/>
    <property type="match status" value="1"/>
</dbReference>
<dbReference type="CDD" id="cd11364">
    <property type="entry name" value="RNase_PH_PNPase_2"/>
    <property type="match status" value="1"/>
</dbReference>
<dbReference type="CDD" id="cd04472">
    <property type="entry name" value="S1_PNPase"/>
    <property type="match status" value="1"/>
</dbReference>
<dbReference type="FunFam" id="2.40.50.140:FF:000069">
    <property type="entry name" value="Polyribonucleotide nucleotidyltransferase"/>
    <property type="match status" value="1"/>
</dbReference>
<dbReference type="FunFam" id="3.30.1370.10:FF:000001">
    <property type="entry name" value="Polyribonucleotide nucleotidyltransferase"/>
    <property type="match status" value="1"/>
</dbReference>
<dbReference type="FunFam" id="3.30.230.70:FF:000001">
    <property type="entry name" value="Polyribonucleotide nucleotidyltransferase"/>
    <property type="match status" value="1"/>
</dbReference>
<dbReference type="FunFam" id="3.30.230.70:FF:000002">
    <property type="entry name" value="Polyribonucleotide nucleotidyltransferase"/>
    <property type="match status" value="1"/>
</dbReference>
<dbReference type="Gene3D" id="3.30.230.70">
    <property type="entry name" value="GHMP Kinase, N-terminal domain"/>
    <property type="match status" value="2"/>
</dbReference>
<dbReference type="Gene3D" id="3.30.1370.10">
    <property type="entry name" value="K Homology domain, type 1"/>
    <property type="match status" value="1"/>
</dbReference>
<dbReference type="Gene3D" id="2.40.50.140">
    <property type="entry name" value="Nucleic acid-binding proteins"/>
    <property type="match status" value="1"/>
</dbReference>
<dbReference type="HAMAP" id="MF_01595">
    <property type="entry name" value="PNPase"/>
    <property type="match status" value="1"/>
</dbReference>
<dbReference type="InterPro" id="IPR001247">
    <property type="entry name" value="ExoRNase_PH_dom1"/>
</dbReference>
<dbReference type="InterPro" id="IPR036345">
    <property type="entry name" value="ExoRNase_PH_dom2_sf"/>
</dbReference>
<dbReference type="InterPro" id="IPR014069">
    <property type="entry name" value="GPSI/PNP"/>
</dbReference>
<dbReference type="InterPro" id="IPR004087">
    <property type="entry name" value="KH_dom"/>
</dbReference>
<dbReference type="InterPro" id="IPR004088">
    <property type="entry name" value="KH_dom_type_1"/>
</dbReference>
<dbReference type="InterPro" id="IPR036612">
    <property type="entry name" value="KH_dom_type_1_sf"/>
</dbReference>
<dbReference type="InterPro" id="IPR012340">
    <property type="entry name" value="NA-bd_OB-fold"/>
</dbReference>
<dbReference type="InterPro" id="IPR012162">
    <property type="entry name" value="PNPase"/>
</dbReference>
<dbReference type="InterPro" id="IPR027408">
    <property type="entry name" value="PNPase/RNase_PH_dom_sf"/>
</dbReference>
<dbReference type="InterPro" id="IPR015848">
    <property type="entry name" value="PNPase_PH_RNA-bd_bac/org-type"/>
</dbReference>
<dbReference type="InterPro" id="IPR036456">
    <property type="entry name" value="PNPase_PH_RNA-bd_sf"/>
</dbReference>
<dbReference type="InterPro" id="IPR020568">
    <property type="entry name" value="Ribosomal_Su5_D2-typ_SF"/>
</dbReference>
<dbReference type="InterPro" id="IPR003029">
    <property type="entry name" value="S1_domain"/>
</dbReference>
<dbReference type="NCBIfam" id="TIGR03591">
    <property type="entry name" value="polynuc_phos"/>
    <property type="match status" value="1"/>
</dbReference>
<dbReference type="NCBIfam" id="TIGR02696">
    <property type="entry name" value="pppGpp_PNP"/>
    <property type="match status" value="1"/>
</dbReference>
<dbReference type="NCBIfam" id="NF008805">
    <property type="entry name" value="PRK11824.1"/>
    <property type="match status" value="1"/>
</dbReference>
<dbReference type="PANTHER" id="PTHR11252">
    <property type="entry name" value="POLYRIBONUCLEOTIDE NUCLEOTIDYLTRANSFERASE"/>
    <property type="match status" value="1"/>
</dbReference>
<dbReference type="PANTHER" id="PTHR11252:SF0">
    <property type="entry name" value="POLYRIBONUCLEOTIDE NUCLEOTIDYLTRANSFERASE 1, MITOCHONDRIAL"/>
    <property type="match status" value="1"/>
</dbReference>
<dbReference type="Pfam" id="PF00013">
    <property type="entry name" value="KH_1"/>
    <property type="match status" value="1"/>
</dbReference>
<dbReference type="Pfam" id="PF03726">
    <property type="entry name" value="PNPase"/>
    <property type="match status" value="1"/>
</dbReference>
<dbReference type="Pfam" id="PF01138">
    <property type="entry name" value="RNase_PH"/>
    <property type="match status" value="2"/>
</dbReference>
<dbReference type="Pfam" id="PF00575">
    <property type="entry name" value="S1"/>
    <property type="match status" value="1"/>
</dbReference>
<dbReference type="PIRSF" id="PIRSF005499">
    <property type="entry name" value="PNPase"/>
    <property type="match status" value="1"/>
</dbReference>
<dbReference type="SMART" id="SM00322">
    <property type="entry name" value="KH"/>
    <property type="match status" value="1"/>
</dbReference>
<dbReference type="SMART" id="SM00316">
    <property type="entry name" value="S1"/>
    <property type="match status" value="1"/>
</dbReference>
<dbReference type="SUPFAM" id="SSF54791">
    <property type="entry name" value="Eukaryotic type KH-domain (KH-domain type I)"/>
    <property type="match status" value="1"/>
</dbReference>
<dbReference type="SUPFAM" id="SSF50249">
    <property type="entry name" value="Nucleic acid-binding proteins"/>
    <property type="match status" value="1"/>
</dbReference>
<dbReference type="SUPFAM" id="SSF46915">
    <property type="entry name" value="Polynucleotide phosphorylase/guanosine pentaphosphate synthase (PNPase/GPSI), domain 3"/>
    <property type="match status" value="1"/>
</dbReference>
<dbReference type="SUPFAM" id="SSF55666">
    <property type="entry name" value="Ribonuclease PH domain 2-like"/>
    <property type="match status" value="2"/>
</dbReference>
<dbReference type="SUPFAM" id="SSF54211">
    <property type="entry name" value="Ribosomal protein S5 domain 2-like"/>
    <property type="match status" value="2"/>
</dbReference>
<dbReference type="PROSITE" id="PS50084">
    <property type="entry name" value="KH_TYPE_1"/>
    <property type="match status" value="1"/>
</dbReference>
<dbReference type="PROSITE" id="PS50126">
    <property type="entry name" value="S1"/>
    <property type="match status" value="1"/>
</dbReference>
<comment type="function">
    <text evidence="1">Involved in mRNA degradation. Catalyzes the phosphorolysis of single-stranded polyribonucleotides processively in the 3'- to 5'-direction.</text>
</comment>
<comment type="catalytic activity">
    <reaction evidence="1">
        <text>RNA(n+1) + phosphate = RNA(n) + a ribonucleoside 5'-diphosphate</text>
        <dbReference type="Rhea" id="RHEA:22096"/>
        <dbReference type="Rhea" id="RHEA-COMP:14527"/>
        <dbReference type="Rhea" id="RHEA-COMP:17342"/>
        <dbReference type="ChEBI" id="CHEBI:43474"/>
        <dbReference type="ChEBI" id="CHEBI:57930"/>
        <dbReference type="ChEBI" id="CHEBI:140395"/>
        <dbReference type="EC" id="2.7.7.8"/>
    </reaction>
</comment>
<comment type="cofactor">
    <cofactor evidence="1">
        <name>Mg(2+)</name>
        <dbReference type="ChEBI" id="CHEBI:18420"/>
    </cofactor>
</comment>
<comment type="subcellular location">
    <subcellularLocation>
        <location evidence="1">Cytoplasm</location>
    </subcellularLocation>
</comment>
<comment type="similarity">
    <text evidence="1">Belongs to the polyribonucleotide nucleotidyltransferase family.</text>
</comment>
<reference key="1">
    <citation type="journal article" date="2008" name="J. Biotechnol.">
        <title>The lifestyle of Corynebacterium urealyticum derived from its complete genome sequence established by pyrosequencing.</title>
        <authorList>
            <person name="Tauch A."/>
            <person name="Trost E."/>
            <person name="Tilker A."/>
            <person name="Ludewig U."/>
            <person name="Schneiker S."/>
            <person name="Goesmann A."/>
            <person name="Arnold W."/>
            <person name="Bekel T."/>
            <person name="Brinkrolf K."/>
            <person name="Brune I."/>
            <person name="Goetker S."/>
            <person name="Kalinowski J."/>
            <person name="Kamp P.-B."/>
            <person name="Lobo F.P."/>
            <person name="Viehoever P."/>
            <person name="Weisshaar B."/>
            <person name="Soriano F."/>
            <person name="Droege M."/>
            <person name="Puehler A."/>
        </authorList>
    </citation>
    <scope>NUCLEOTIDE SEQUENCE [LARGE SCALE GENOMIC DNA]</scope>
    <source>
        <strain>ATCC 43042 / DSM 7109</strain>
    </source>
</reference>
<sequence>MKGRGTHAMSSKKNNLPKNVSVEMVDPDAGIWEATATIDNGDFGSRTLRFETGLLARQADGAVTAYLDEDTILLSTTTASRSPREGIDFFPLTVDVEERMYSAGRIPGSFFRREGRPGTDAILAARLIDRPLRPTFVKGLRNEVQVVITVMSIDPNEMYDVLAINGASASTQLSGLPVSSSVGGVRMALVVDEEHPEGQWVAFPTREQVSQSVFELVVAGRVTEPAKGGRGKKSQPNVAVMMVEAGATDNVVERIAEGAPAPTEAVVAEGIEAAKPFIATLCAAQDALRDAVDTESREFELFPPFDEDVYSAVEAECDADVAQIMTIADKQERDESLAENMQETVDALIEQFPERESEIRAAHNDLTRTIVRQRILEDGFRIDGRDHTSIRDLGIVVQLLPRAHGSALFERGETQILGVTTLDTLKMEQTIDSLGPETSKRYIHHYNFPPYSTGETGRVGSPKRREIGHGALAERALTPVLPSREEFPYTIRQVSEALGSNGSTSMGSVCASTLSLYNAGVPLKAPVAGIAMGLVSGLVDGKEKFVSLTDILGAEDAFGDMDFKVAGTSEYVTALQLDTKLDGLPSEVLASALGQARSARLEILQLMEDAIDAPDQMSELAPRITKISIPQNKIGEVIGPKGKTINQITEETGANISIEDDGTVFVSAVGGEAAEAAIEKINAIANPQQPKVGDRFLGTVVKTTAFGAFISLLPGRDGLLHISNIGGDRRIEKVEDELNVGDKIQVEIADIDNRGKISLVPVDED</sequence>
<organism>
    <name type="scientific">Corynebacterium urealyticum (strain ATCC 43042 / DSM 7109)</name>
    <dbReference type="NCBI Taxonomy" id="504474"/>
    <lineage>
        <taxon>Bacteria</taxon>
        <taxon>Bacillati</taxon>
        <taxon>Actinomycetota</taxon>
        <taxon>Actinomycetes</taxon>
        <taxon>Mycobacteriales</taxon>
        <taxon>Corynebacteriaceae</taxon>
        <taxon>Corynebacterium</taxon>
    </lineage>
</organism>
<protein>
    <recommendedName>
        <fullName evidence="1">Polyribonucleotide nucleotidyltransferase</fullName>
        <ecNumber evidence="1">2.7.7.8</ecNumber>
    </recommendedName>
    <alternativeName>
        <fullName evidence="1">Polynucleotide phosphorylase</fullName>
        <shortName evidence="1">PNPase</shortName>
    </alternativeName>
</protein>
<name>PNP_CORU7</name>
<keyword id="KW-0963">Cytoplasm</keyword>
<keyword id="KW-0460">Magnesium</keyword>
<keyword id="KW-0479">Metal-binding</keyword>
<keyword id="KW-0548">Nucleotidyltransferase</keyword>
<keyword id="KW-1185">Reference proteome</keyword>
<keyword id="KW-0694">RNA-binding</keyword>
<keyword id="KW-0808">Transferase</keyword>
<proteinExistence type="inferred from homology"/>
<feature type="chain" id="PRO_0000381880" description="Polyribonucleotide nucleotidyltransferase">
    <location>
        <begin position="1"/>
        <end position="765"/>
    </location>
</feature>
<feature type="domain" description="KH" evidence="1">
    <location>
        <begin position="622"/>
        <end position="681"/>
    </location>
</feature>
<feature type="domain" description="S1 motif" evidence="1">
    <location>
        <begin position="693"/>
        <end position="762"/>
    </location>
</feature>
<feature type="binding site" evidence="1">
    <location>
        <position position="556"/>
    </location>
    <ligand>
        <name>Mg(2+)</name>
        <dbReference type="ChEBI" id="CHEBI:18420"/>
    </ligand>
</feature>
<feature type="binding site" evidence="1">
    <location>
        <position position="562"/>
    </location>
    <ligand>
        <name>Mg(2+)</name>
        <dbReference type="ChEBI" id="CHEBI:18420"/>
    </ligand>
</feature>
<accession>B1VDC1</accession>
<gene>
    <name evidence="1" type="primary">pnp</name>
    <name type="ordered locus">cu0859</name>
</gene>